<feature type="signal peptide" evidence="3">
    <location>
        <begin position="1"/>
        <end position="23"/>
    </location>
</feature>
<feature type="chain" id="PRO_0000282913" description="Thiamine-binding periplasmic protein">
    <location>
        <begin position="24"/>
        <end position="334"/>
    </location>
</feature>
<feature type="binding site" evidence="1">
    <location>
        <begin position="64"/>
        <end position="65"/>
    </location>
    <ligand>
        <name>thiamine</name>
        <dbReference type="ChEBI" id="CHEBI:18385"/>
    </ligand>
</feature>
<feature type="binding site" evidence="1">
    <location>
        <begin position="166"/>
        <end position="167"/>
    </location>
    <ligand>
        <name>thiamine</name>
        <dbReference type="ChEBI" id="CHEBI:18385"/>
    </ligand>
</feature>
<feature type="binding site" evidence="1">
    <location>
        <position position="202"/>
    </location>
    <ligand>
        <name>thiamine</name>
        <dbReference type="ChEBI" id="CHEBI:18385"/>
    </ligand>
</feature>
<feature type="binding site" evidence="1">
    <location>
        <begin position="220"/>
        <end position="223"/>
    </location>
    <ligand>
        <name>thiamine</name>
        <dbReference type="ChEBI" id="CHEBI:18385"/>
    </ligand>
</feature>
<reference key="1">
    <citation type="journal article" date="2002" name="Proc. Natl. Acad. Sci. U.S.A.">
        <title>The genome sequence of the facultative intracellular pathogen Brucella melitensis.</title>
        <authorList>
            <person name="DelVecchio V.G."/>
            <person name="Kapatral V."/>
            <person name="Redkar R.J."/>
            <person name="Patra G."/>
            <person name="Mujer C."/>
            <person name="Los T."/>
            <person name="Ivanova N."/>
            <person name="Anderson I."/>
            <person name="Bhattacharyya A."/>
            <person name="Lykidis A."/>
            <person name="Reznik G."/>
            <person name="Jablonski L."/>
            <person name="Larsen N."/>
            <person name="D'Souza M."/>
            <person name="Bernal A."/>
            <person name="Mazur M."/>
            <person name="Goltsman E."/>
            <person name="Selkov E."/>
            <person name="Elzer P.H."/>
            <person name="Hagius S."/>
            <person name="O'Callaghan D."/>
            <person name="Letesson J.-J."/>
            <person name="Haselkorn R."/>
            <person name="Kyrpides N.C."/>
            <person name="Overbeek R."/>
        </authorList>
    </citation>
    <scope>NUCLEOTIDE SEQUENCE [LARGE SCALE GENOMIC DNA]</scope>
    <source>
        <strain>ATCC 23456 / CCUG 17765 / NCTC 10094 / 16M</strain>
    </source>
</reference>
<sequence length="334" mass="36737">MRLLSLLTFSLFAVIGLAPAAQAKDKLTIYTYDSFVSEWGPGPKVKENFEKECDCEVNFVASADGVALLNRLKLEGSKTAADIVLGLDTNLTTEARASGFFAPSGIDQTNVKVPGNFKDDIFVPYDYGYFAVVYDSEKLPNPPKSLKELVEGDPAQKIVLQDPRTATPGLGMLLWMKSVYGDEAGAAWQKLQKRVLTVTPGWSEAYGLFTKGEAPMVLSYTTSPAYHMVVEKTNRYKALAYPEGNYLQIELAAQTTTGAKNPLAKKFLAFMTGPGFQDVIPETNWMFPAGKTSKPLPAAFDALPKPEKTLLIPPYEVAKNRRLWVNEWLAATSR</sequence>
<name>THIB_BRUME</name>
<keyword id="KW-0574">Periplasm</keyword>
<keyword id="KW-0732">Signal</keyword>
<keyword id="KW-0813">Transport</keyword>
<protein>
    <recommendedName>
        <fullName>Thiamine-binding periplasmic protein</fullName>
    </recommendedName>
</protein>
<accession>Q8YJ02</accession>
<gene>
    <name type="primary">thiB</name>
    <name type="ordered locus">BMEI0285</name>
</gene>
<dbReference type="EMBL" id="AE008917">
    <property type="protein sequence ID" value="AAL51466.1"/>
    <property type="status" value="ALT_INIT"/>
    <property type="molecule type" value="Genomic_DNA"/>
</dbReference>
<dbReference type="PIR" id="AG3287">
    <property type="entry name" value="AG3287"/>
</dbReference>
<dbReference type="RefSeq" id="WP_004684204.1">
    <property type="nucleotide sequence ID" value="NZ_GG703781.1"/>
</dbReference>
<dbReference type="SMR" id="Q8YJ02"/>
<dbReference type="GeneID" id="29593036"/>
<dbReference type="KEGG" id="bme:BMEI0285"/>
<dbReference type="KEGG" id="bmel:DK63_1148"/>
<dbReference type="PATRIC" id="fig|224914.52.peg.1212"/>
<dbReference type="eggNOG" id="COG4143">
    <property type="taxonomic scope" value="Bacteria"/>
</dbReference>
<dbReference type="PhylomeDB" id="Q8YJ02"/>
<dbReference type="Proteomes" id="UP000000419">
    <property type="component" value="Chromosome I"/>
</dbReference>
<dbReference type="GO" id="GO:0030288">
    <property type="term" value="C:outer membrane-bounded periplasmic space"/>
    <property type="evidence" value="ECO:0007669"/>
    <property type="project" value="InterPro"/>
</dbReference>
<dbReference type="GO" id="GO:0030975">
    <property type="term" value="F:thiamine binding"/>
    <property type="evidence" value="ECO:0007669"/>
    <property type="project" value="InterPro"/>
</dbReference>
<dbReference type="GO" id="GO:0030976">
    <property type="term" value="F:thiamine pyrophosphate binding"/>
    <property type="evidence" value="ECO:0007669"/>
    <property type="project" value="TreeGrafter"/>
</dbReference>
<dbReference type="GO" id="GO:0015888">
    <property type="term" value="P:thiamine transport"/>
    <property type="evidence" value="ECO:0007669"/>
    <property type="project" value="InterPro"/>
</dbReference>
<dbReference type="CDD" id="cd13545">
    <property type="entry name" value="PBP2_TbpA"/>
    <property type="match status" value="1"/>
</dbReference>
<dbReference type="Gene3D" id="3.40.190.10">
    <property type="entry name" value="Periplasmic binding protein-like II"/>
    <property type="match status" value="2"/>
</dbReference>
<dbReference type="InterPro" id="IPR006059">
    <property type="entry name" value="SBP"/>
</dbReference>
<dbReference type="InterPro" id="IPR005967">
    <property type="entry name" value="ThiB"/>
</dbReference>
<dbReference type="InterPro" id="IPR005948">
    <property type="entry name" value="ThiB-like"/>
</dbReference>
<dbReference type="NCBIfam" id="TIGR01254">
    <property type="entry name" value="sfuA"/>
    <property type="match status" value="1"/>
</dbReference>
<dbReference type="NCBIfam" id="TIGR01276">
    <property type="entry name" value="thiB"/>
    <property type="match status" value="1"/>
</dbReference>
<dbReference type="PANTHER" id="PTHR30006:SF3">
    <property type="entry name" value="THIAMINE-BINDING PERIPLASMIC PROTEIN"/>
    <property type="match status" value="1"/>
</dbReference>
<dbReference type="PANTHER" id="PTHR30006">
    <property type="entry name" value="THIAMINE-BINDING PERIPLASMIC PROTEIN-RELATED"/>
    <property type="match status" value="1"/>
</dbReference>
<dbReference type="Pfam" id="PF01547">
    <property type="entry name" value="SBP_bac_1"/>
    <property type="match status" value="1"/>
</dbReference>
<dbReference type="SUPFAM" id="SSF53850">
    <property type="entry name" value="Periplasmic binding protein-like II"/>
    <property type="match status" value="1"/>
</dbReference>
<comment type="function">
    <text evidence="1">Part of the ABC transporter complex ThiBPQ involved in thiamine import.</text>
</comment>
<comment type="subunit">
    <text evidence="2">The complex is composed of two ATP-binding proteins (ThiQ), two transmembrane proteins (ThiP) and a solute-binding protein (ThiB).</text>
</comment>
<comment type="subcellular location">
    <subcellularLocation>
        <location evidence="1">Periplasm</location>
    </subcellularLocation>
</comment>
<comment type="similarity">
    <text evidence="4">Belongs to the bacterial solute-binding protein 1 family.</text>
</comment>
<comment type="sequence caution" evidence="4">
    <conflict type="erroneous initiation">
        <sequence resource="EMBL-CDS" id="AAL51466"/>
    </conflict>
</comment>
<organism>
    <name type="scientific">Brucella melitensis biotype 1 (strain ATCC 23456 / CCUG 17765 / NCTC 10094 / 16M)</name>
    <dbReference type="NCBI Taxonomy" id="224914"/>
    <lineage>
        <taxon>Bacteria</taxon>
        <taxon>Pseudomonadati</taxon>
        <taxon>Pseudomonadota</taxon>
        <taxon>Alphaproteobacteria</taxon>
        <taxon>Hyphomicrobiales</taxon>
        <taxon>Brucellaceae</taxon>
        <taxon>Brucella/Ochrobactrum group</taxon>
        <taxon>Brucella</taxon>
    </lineage>
</organism>
<evidence type="ECO:0000250" key="1">
    <source>
        <dbReference type="UniProtKB" id="P31550"/>
    </source>
</evidence>
<evidence type="ECO:0000250" key="2">
    <source>
        <dbReference type="UniProtKB" id="Q7CR85"/>
    </source>
</evidence>
<evidence type="ECO:0000255" key="3"/>
<evidence type="ECO:0000305" key="4"/>
<proteinExistence type="inferred from homology"/>